<protein>
    <recommendedName>
        <fullName evidence="1">Phospho-N-acetylmuramoyl-pentapeptide-transferase</fullName>
        <ecNumber evidence="1">2.7.8.13</ecNumber>
    </recommendedName>
    <alternativeName>
        <fullName evidence="1">UDP-MurNAc-pentapeptide phosphotransferase</fullName>
    </alternativeName>
</protein>
<sequence length="302" mass="33814">MIAANFLLNLFLYPILIKLFRRRRIGQYIRKEGPDLHGYKEGTPTMGGILFVLTGFLFGMISKTNTMVLLGMFLFFLIGFLDDFLSVARKDSTGLKTYQKALLQTLAAFIMLLLIRPDTNVDFFGSTIEMGKWYYLFALLVIVGSSNAMNLTDGLDGLAGWIYVSGSIPYWFFLKERGVSEDILLILGVGVLAFLVFNSKPAKIFMGDTGSITLGGVLGTVSVLTKTEFYLVLFFMIPVIETLSVILQVGSFKIFKRRIFKMSPLHHHFELIGWSEEKIVAVFTVFNLISSLVALEIFGVIG</sequence>
<evidence type="ECO:0000255" key="1">
    <source>
        <dbReference type="HAMAP-Rule" id="MF_00038"/>
    </source>
</evidence>
<dbReference type="EC" id="2.7.8.13" evidence="1"/>
<dbReference type="EMBL" id="AE000512">
    <property type="protein sequence ID" value="AAD35326.1"/>
    <property type="molecule type" value="Genomic_DNA"/>
</dbReference>
<dbReference type="PIR" id="E72402">
    <property type="entry name" value="E72402"/>
</dbReference>
<dbReference type="RefSeq" id="NP_228049.1">
    <property type="nucleotide sequence ID" value="NC_000853.1"/>
</dbReference>
<dbReference type="RefSeq" id="WP_004082932.1">
    <property type="nucleotide sequence ID" value="NZ_CP011107.1"/>
</dbReference>
<dbReference type="SMR" id="Q9WY77"/>
<dbReference type="FunCoup" id="Q9WY77">
    <property type="interactions" value="373"/>
</dbReference>
<dbReference type="STRING" id="243274.TM_0235"/>
<dbReference type="SwissLipids" id="SLP:000001816"/>
<dbReference type="PaxDb" id="243274-THEMA_03550"/>
<dbReference type="DNASU" id="897134"/>
<dbReference type="EnsemblBacteria" id="AAD35326">
    <property type="protein sequence ID" value="AAD35326"/>
    <property type="gene ID" value="TM_0235"/>
</dbReference>
<dbReference type="KEGG" id="tma:TM0235"/>
<dbReference type="KEGG" id="tmi:THEMA_03550"/>
<dbReference type="KEGG" id="tmm:Tmari_0233"/>
<dbReference type="KEGG" id="tmw:THMA_0242"/>
<dbReference type="eggNOG" id="COG0472">
    <property type="taxonomic scope" value="Bacteria"/>
</dbReference>
<dbReference type="InParanoid" id="Q9WY77"/>
<dbReference type="OrthoDB" id="9805475at2"/>
<dbReference type="UniPathway" id="UPA00219"/>
<dbReference type="Proteomes" id="UP000008183">
    <property type="component" value="Chromosome"/>
</dbReference>
<dbReference type="GO" id="GO:0005886">
    <property type="term" value="C:plasma membrane"/>
    <property type="evidence" value="ECO:0000318"/>
    <property type="project" value="GO_Central"/>
</dbReference>
<dbReference type="GO" id="GO:0046872">
    <property type="term" value="F:metal ion binding"/>
    <property type="evidence" value="ECO:0007669"/>
    <property type="project" value="UniProtKB-KW"/>
</dbReference>
<dbReference type="GO" id="GO:0008963">
    <property type="term" value="F:phospho-N-acetylmuramoyl-pentapeptide-transferase activity"/>
    <property type="evidence" value="ECO:0007669"/>
    <property type="project" value="UniProtKB-UniRule"/>
</dbReference>
<dbReference type="GO" id="GO:0016780">
    <property type="term" value="F:phosphotransferase activity, for other substituted phosphate groups"/>
    <property type="evidence" value="ECO:0000318"/>
    <property type="project" value="GO_Central"/>
</dbReference>
<dbReference type="GO" id="GO:0051992">
    <property type="term" value="F:UDP-N-acetylmuramoyl-L-alanyl-D-glutamyl-meso-2,6-diaminopimelyl-D-alanyl-D-alanine:undecaprenyl-phosphate transferase activity"/>
    <property type="evidence" value="ECO:0007669"/>
    <property type="project" value="RHEA"/>
</dbReference>
<dbReference type="GO" id="GO:0051301">
    <property type="term" value="P:cell division"/>
    <property type="evidence" value="ECO:0007669"/>
    <property type="project" value="UniProtKB-KW"/>
</dbReference>
<dbReference type="GO" id="GO:0044038">
    <property type="term" value="P:cell wall macromolecule biosynthetic process"/>
    <property type="evidence" value="ECO:0000318"/>
    <property type="project" value="GO_Central"/>
</dbReference>
<dbReference type="GO" id="GO:0071555">
    <property type="term" value="P:cell wall organization"/>
    <property type="evidence" value="ECO:0000318"/>
    <property type="project" value="GO_Central"/>
</dbReference>
<dbReference type="GO" id="GO:0009252">
    <property type="term" value="P:peptidoglycan biosynthetic process"/>
    <property type="evidence" value="ECO:0007669"/>
    <property type="project" value="UniProtKB-UniRule"/>
</dbReference>
<dbReference type="GO" id="GO:0008360">
    <property type="term" value="P:regulation of cell shape"/>
    <property type="evidence" value="ECO:0007669"/>
    <property type="project" value="UniProtKB-KW"/>
</dbReference>
<dbReference type="CDD" id="cd06852">
    <property type="entry name" value="GT_MraY"/>
    <property type="match status" value="1"/>
</dbReference>
<dbReference type="HAMAP" id="MF_00038">
    <property type="entry name" value="MraY"/>
    <property type="match status" value="1"/>
</dbReference>
<dbReference type="InterPro" id="IPR000715">
    <property type="entry name" value="Glycosyl_transferase_4"/>
</dbReference>
<dbReference type="InterPro" id="IPR003524">
    <property type="entry name" value="PNAcMuramoyl-5peptid_Trfase"/>
</dbReference>
<dbReference type="InterPro" id="IPR018480">
    <property type="entry name" value="PNAcMuramoyl-5peptid_Trfase_CS"/>
</dbReference>
<dbReference type="NCBIfam" id="TIGR00445">
    <property type="entry name" value="mraY"/>
    <property type="match status" value="1"/>
</dbReference>
<dbReference type="PANTHER" id="PTHR22926">
    <property type="entry name" value="PHOSPHO-N-ACETYLMURAMOYL-PENTAPEPTIDE-TRANSFERASE"/>
    <property type="match status" value="1"/>
</dbReference>
<dbReference type="PANTHER" id="PTHR22926:SF5">
    <property type="entry name" value="PHOSPHO-N-ACETYLMURAMOYL-PENTAPEPTIDE-TRANSFERASE HOMOLOG"/>
    <property type="match status" value="1"/>
</dbReference>
<dbReference type="Pfam" id="PF00953">
    <property type="entry name" value="Glycos_transf_4"/>
    <property type="match status" value="1"/>
</dbReference>
<dbReference type="Pfam" id="PF10555">
    <property type="entry name" value="MraY_sig1"/>
    <property type="match status" value="1"/>
</dbReference>
<dbReference type="PROSITE" id="PS01347">
    <property type="entry name" value="MRAY_1"/>
    <property type="match status" value="1"/>
</dbReference>
<dbReference type="PROSITE" id="PS01348">
    <property type="entry name" value="MRAY_2"/>
    <property type="match status" value="1"/>
</dbReference>
<keyword id="KW-0131">Cell cycle</keyword>
<keyword id="KW-0132">Cell division</keyword>
<keyword id="KW-0997">Cell inner membrane</keyword>
<keyword id="KW-1003">Cell membrane</keyword>
<keyword id="KW-0133">Cell shape</keyword>
<keyword id="KW-0961">Cell wall biogenesis/degradation</keyword>
<keyword id="KW-0460">Magnesium</keyword>
<keyword id="KW-0472">Membrane</keyword>
<keyword id="KW-0479">Metal-binding</keyword>
<keyword id="KW-0573">Peptidoglycan synthesis</keyword>
<keyword id="KW-1185">Reference proteome</keyword>
<keyword id="KW-0808">Transferase</keyword>
<keyword id="KW-0812">Transmembrane</keyword>
<keyword id="KW-1133">Transmembrane helix</keyword>
<feature type="chain" id="PRO_0000108917" description="Phospho-N-acetylmuramoyl-pentapeptide-transferase">
    <location>
        <begin position="1"/>
        <end position="302"/>
    </location>
</feature>
<feature type="transmembrane region" description="Helical" evidence="1">
    <location>
        <begin position="1"/>
        <end position="21"/>
    </location>
</feature>
<feature type="transmembrane region" description="Helical" evidence="1">
    <location>
        <begin position="42"/>
        <end position="62"/>
    </location>
</feature>
<feature type="transmembrane region" description="Helical" evidence="1">
    <location>
        <begin position="67"/>
        <end position="87"/>
    </location>
</feature>
<feature type="transmembrane region" description="Helical" evidence="1">
    <location>
        <begin position="95"/>
        <end position="115"/>
    </location>
</feature>
<feature type="transmembrane region" description="Helical" evidence="1">
    <location>
        <begin position="123"/>
        <end position="143"/>
    </location>
</feature>
<feature type="transmembrane region" description="Helical" evidence="1">
    <location>
        <begin position="154"/>
        <end position="174"/>
    </location>
</feature>
<feature type="transmembrane region" description="Helical" evidence="1">
    <location>
        <begin position="178"/>
        <end position="198"/>
    </location>
</feature>
<feature type="transmembrane region" description="Helical" evidence="1">
    <location>
        <begin position="204"/>
        <end position="224"/>
    </location>
</feature>
<feature type="transmembrane region" description="Helical" evidence="1">
    <location>
        <begin position="229"/>
        <end position="249"/>
    </location>
</feature>
<feature type="transmembrane region" description="Helical" evidence="1">
    <location>
        <begin position="279"/>
        <end position="299"/>
    </location>
</feature>
<accession>Q9WY77</accession>
<reference key="1">
    <citation type="journal article" date="1999" name="Nature">
        <title>Evidence for lateral gene transfer between Archaea and Bacteria from genome sequence of Thermotoga maritima.</title>
        <authorList>
            <person name="Nelson K.E."/>
            <person name="Clayton R.A."/>
            <person name="Gill S.R."/>
            <person name="Gwinn M.L."/>
            <person name="Dodson R.J."/>
            <person name="Haft D.H."/>
            <person name="Hickey E.K."/>
            <person name="Peterson J.D."/>
            <person name="Nelson W.C."/>
            <person name="Ketchum K.A."/>
            <person name="McDonald L.A."/>
            <person name="Utterback T.R."/>
            <person name="Malek J.A."/>
            <person name="Linher K.D."/>
            <person name="Garrett M.M."/>
            <person name="Stewart A.M."/>
            <person name="Cotton M.D."/>
            <person name="Pratt M.S."/>
            <person name="Phillips C.A."/>
            <person name="Richardson D.L."/>
            <person name="Heidelberg J.F."/>
            <person name="Sutton G.G."/>
            <person name="Fleischmann R.D."/>
            <person name="Eisen J.A."/>
            <person name="White O."/>
            <person name="Salzberg S.L."/>
            <person name="Smith H.O."/>
            <person name="Venter J.C."/>
            <person name="Fraser C.M."/>
        </authorList>
    </citation>
    <scope>NUCLEOTIDE SEQUENCE [LARGE SCALE GENOMIC DNA]</scope>
    <source>
        <strain>ATCC 43589 / DSM 3109 / JCM 10099 / NBRC 100826 / MSB8</strain>
    </source>
</reference>
<name>MRAY_THEMA</name>
<proteinExistence type="inferred from homology"/>
<gene>
    <name evidence="1" type="primary">mraY</name>
    <name type="ordered locus">TM_0235</name>
</gene>
<comment type="function">
    <text evidence="1">Catalyzes the initial step of the lipid cycle reactions in the biosynthesis of the cell wall peptidoglycan: transfers peptidoglycan precursor phospho-MurNAc-pentapeptide from UDP-MurNAc-pentapeptide onto the lipid carrier undecaprenyl phosphate, yielding undecaprenyl-pyrophosphoryl-MurNAc-pentapeptide, known as lipid I.</text>
</comment>
<comment type="catalytic activity">
    <reaction evidence="1">
        <text>UDP-N-acetyl-alpha-D-muramoyl-L-alanyl-gamma-D-glutamyl-meso-2,6-diaminopimeloyl-D-alanyl-D-alanine + di-trans,octa-cis-undecaprenyl phosphate = di-trans,octa-cis-undecaprenyl diphospho-N-acetyl-alpha-D-muramoyl-L-alanyl-D-glutamyl-meso-2,6-diaminopimeloyl-D-alanyl-D-alanine + UMP</text>
        <dbReference type="Rhea" id="RHEA:28386"/>
        <dbReference type="ChEBI" id="CHEBI:57865"/>
        <dbReference type="ChEBI" id="CHEBI:60392"/>
        <dbReference type="ChEBI" id="CHEBI:61386"/>
        <dbReference type="ChEBI" id="CHEBI:61387"/>
        <dbReference type="EC" id="2.7.8.13"/>
    </reaction>
</comment>
<comment type="cofactor">
    <cofactor evidence="1">
        <name>Mg(2+)</name>
        <dbReference type="ChEBI" id="CHEBI:18420"/>
    </cofactor>
</comment>
<comment type="pathway">
    <text evidence="1">Cell wall biogenesis; peptidoglycan biosynthesis.</text>
</comment>
<comment type="subcellular location">
    <subcellularLocation>
        <location evidence="1">Cell inner membrane</location>
        <topology evidence="1">Multi-pass membrane protein</topology>
    </subcellularLocation>
</comment>
<comment type="similarity">
    <text evidence="1">Belongs to the glycosyltransferase 4 family. MraY subfamily.</text>
</comment>
<organism>
    <name type="scientific">Thermotoga maritima (strain ATCC 43589 / DSM 3109 / JCM 10099 / NBRC 100826 / MSB8)</name>
    <dbReference type="NCBI Taxonomy" id="243274"/>
    <lineage>
        <taxon>Bacteria</taxon>
        <taxon>Thermotogati</taxon>
        <taxon>Thermotogota</taxon>
        <taxon>Thermotogae</taxon>
        <taxon>Thermotogales</taxon>
        <taxon>Thermotogaceae</taxon>
        <taxon>Thermotoga</taxon>
    </lineage>
</organism>